<dbReference type="EC" id="6.3.1.5" evidence="1"/>
<dbReference type="EMBL" id="AE017194">
    <property type="protein sequence ID" value="AAS40996.1"/>
    <property type="molecule type" value="Genomic_DNA"/>
</dbReference>
<dbReference type="SMR" id="Q739R5"/>
<dbReference type="KEGG" id="bca:BCE_2075"/>
<dbReference type="HOGENOM" id="CLU_059327_3_0_9"/>
<dbReference type="UniPathway" id="UPA00253">
    <property type="reaction ID" value="UER00333"/>
</dbReference>
<dbReference type="Proteomes" id="UP000002527">
    <property type="component" value="Chromosome"/>
</dbReference>
<dbReference type="GO" id="GO:0005737">
    <property type="term" value="C:cytoplasm"/>
    <property type="evidence" value="ECO:0007669"/>
    <property type="project" value="InterPro"/>
</dbReference>
<dbReference type="GO" id="GO:0005524">
    <property type="term" value="F:ATP binding"/>
    <property type="evidence" value="ECO:0007669"/>
    <property type="project" value="UniProtKB-UniRule"/>
</dbReference>
<dbReference type="GO" id="GO:0004359">
    <property type="term" value="F:glutaminase activity"/>
    <property type="evidence" value="ECO:0007669"/>
    <property type="project" value="InterPro"/>
</dbReference>
<dbReference type="GO" id="GO:0046872">
    <property type="term" value="F:metal ion binding"/>
    <property type="evidence" value="ECO:0007669"/>
    <property type="project" value="UniProtKB-KW"/>
</dbReference>
<dbReference type="GO" id="GO:0003952">
    <property type="term" value="F:NAD+ synthase (glutamine-hydrolyzing) activity"/>
    <property type="evidence" value="ECO:0007669"/>
    <property type="project" value="InterPro"/>
</dbReference>
<dbReference type="GO" id="GO:0008795">
    <property type="term" value="F:NAD+ synthase activity"/>
    <property type="evidence" value="ECO:0007669"/>
    <property type="project" value="UniProtKB-UniRule"/>
</dbReference>
<dbReference type="GO" id="GO:0009435">
    <property type="term" value="P:NAD biosynthetic process"/>
    <property type="evidence" value="ECO:0007669"/>
    <property type="project" value="UniProtKB-UniRule"/>
</dbReference>
<dbReference type="CDD" id="cd00553">
    <property type="entry name" value="NAD_synthase"/>
    <property type="match status" value="1"/>
</dbReference>
<dbReference type="FunFam" id="3.40.50.620:FF:000015">
    <property type="entry name" value="NH(3)-dependent NAD(+) synthetase"/>
    <property type="match status" value="1"/>
</dbReference>
<dbReference type="Gene3D" id="3.40.50.620">
    <property type="entry name" value="HUPs"/>
    <property type="match status" value="1"/>
</dbReference>
<dbReference type="HAMAP" id="MF_00193">
    <property type="entry name" value="NadE_ammonia_dep"/>
    <property type="match status" value="1"/>
</dbReference>
<dbReference type="InterPro" id="IPR022310">
    <property type="entry name" value="NAD/GMP_synthase"/>
</dbReference>
<dbReference type="InterPro" id="IPR003694">
    <property type="entry name" value="NAD_synthase"/>
</dbReference>
<dbReference type="InterPro" id="IPR022926">
    <property type="entry name" value="NH(3)-dep_NAD(+)_synth"/>
</dbReference>
<dbReference type="InterPro" id="IPR014729">
    <property type="entry name" value="Rossmann-like_a/b/a_fold"/>
</dbReference>
<dbReference type="NCBIfam" id="TIGR00552">
    <property type="entry name" value="nadE"/>
    <property type="match status" value="1"/>
</dbReference>
<dbReference type="NCBIfam" id="NF001979">
    <property type="entry name" value="PRK00768.1"/>
    <property type="match status" value="1"/>
</dbReference>
<dbReference type="PANTHER" id="PTHR23090">
    <property type="entry name" value="NH 3 /GLUTAMINE-DEPENDENT NAD + SYNTHETASE"/>
    <property type="match status" value="1"/>
</dbReference>
<dbReference type="PANTHER" id="PTHR23090:SF7">
    <property type="entry name" value="NH(3)-DEPENDENT NAD(+) SYNTHETASE"/>
    <property type="match status" value="1"/>
</dbReference>
<dbReference type="Pfam" id="PF02540">
    <property type="entry name" value="NAD_synthase"/>
    <property type="match status" value="1"/>
</dbReference>
<dbReference type="SUPFAM" id="SSF52402">
    <property type="entry name" value="Adenine nucleotide alpha hydrolases-like"/>
    <property type="match status" value="1"/>
</dbReference>
<accession>Q739R5</accession>
<gene>
    <name evidence="1" type="primary">nadE</name>
    <name type="ordered locus">BCE_2075</name>
</gene>
<comment type="function">
    <text evidence="1">Catalyzes the ATP-dependent amidation of deamido-NAD to form NAD. Uses ammonia as a nitrogen source.</text>
</comment>
<comment type="catalytic activity">
    <reaction evidence="1">
        <text>deamido-NAD(+) + NH4(+) + ATP = AMP + diphosphate + NAD(+) + H(+)</text>
        <dbReference type="Rhea" id="RHEA:21188"/>
        <dbReference type="ChEBI" id="CHEBI:15378"/>
        <dbReference type="ChEBI" id="CHEBI:28938"/>
        <dbReference type="ChEBI" id="CHEBI:30616"/>
        <dbReference type="ChEBI" id="CHEBI:33019"/>
        <dbReference type="ChEBI" id="CHEBI:57540"/>
        <dbReference type="ChEBI" id="CHEBI:58437"/>
        <dbReference type="ChEBI" id="CHEBI:456215"/>
        <dbReference type="EC" id="6.3.1.5"/>
    </reaction>
</comment>
<comment type="pathway">
    <text evidence="1">Cofactor biosynthesis; NAD(+) biosynthesis; NAD(+) from deamido-NAD(+) (ammonia route): step 1/1.</text>
</comment>
<comment type="subunit">
    <text evidence="1">Homodimer.</text>
</comment>
<comment type="similarity">
    <text evidence="1">Belongs to the NAD synthetase family.</text>
</comment>
<feature type="chain" id="PRO_1000077533" description="NH(3)-dependent NAD(+) synthetase">
    <location>
        <begin position="1"/>
        <end position="272"/>
    </location>
</feature>
<feature type="binding site" evidence="1">
    <location>
        <begin position="45"/>
        <end position="52"/>
    </location>
    <ligand>
        <name>ATP</name>
        <dbReference type="ChEBI" id="CHEBI:30616"/>
    </ligand>
</feature>
<feature type="binding site" evidence="1">
    <location>
        <position position="51"/>
    </location>
    <ligand>
        <name>Mg(2+)</name>
        <dbReference type="ChEBI" id="CHEBI:18420"/>
    </ligand>
</feature>
<feature type="binding site" evidence="1">
    <location>
        <position position="138"/>
    </location>
    <ligand>
        <name>deamido-NAD(+)</name>
        <dbReference type="ChEBI" id="CHEBI:58437"/>
    </ligand>
</feature>
<feature type="binding site" evidence="1">
    <location>
        <position position="158"/>
    </location>
    <ligand>
        <name>ATP</name>
        <dbReference type="ChEBI" id="CHEBI:30616"/>
    </ligand>
</feature>
<feature type="binding site" evidence="1">
    <location>
        <position position="163"/>
    </location>
    <ligand>
        <name>Mg(2+)</name>
        <dbReference type="ChEBI" id="CHEBI:18420"/>
    </ligand>
</feature>
<feature type="binding site" evidence="1">
    <location>
        <position position="171"/>
    </location>
    <ligand>
        <name>deamido-NAD(+)</name>
        <dbReference type="ChEBI" id="CHEBI:58437"/>
    </ligand>
</feature>
<feature type="binding site" evidence="1">
    <location>
        <position position="178"/>
    </location>
    <ligand>
        <name>deamido-NAD(+)</name>
        <dbReference type="ChEBI" id="CHEBI:58437"/>
    </ligand>
</feature>
<feature type="binding site" evidence="1">
    <location>
        <position position="187"/>
    </location>
    <ligand>
        <name>ATP</name>
        <dbReference type="ChEBI" id="CHEBI:30616"/>
    </ligand>
</feature>
<feature type="binding site" evidence="1">
    <location>
        <position position="209"/>
    </location>
    <ligand>
        <name>ATP</name>
        <dbReference type="ChEBI" id="CHEBI:30616"/>
    </ligand>
</feature>
<feature type="binding site" evidence="1">
    <location>
        <begin position="258"/>
        <end position="259"/>
    </location>
    <ligand>
        <name>deamido-NAD(+)</name>
        <dbReference type="ChEBI" id="CHEBI:58437"/>
    </ligand>
</feature>
<organism>
    <name type="scientific">Bacillus cereus (strain ATCC 10987 / NRS 248)</name>
    <dbReference type="NCBI Taxonomy" id="222523"/>
    <lineage>
        <taxon>Bacteria</taxon>
        <taxon>Bacillati</taxon>
        <taxon>Bacillota</taxon>
        <taxon>Bacilli</taxon>
        <taxon>Bacillales</taxon>
        <taxon>Bacillaceae</taxon>
        <taxon>Bacillus</taxon>
        <taxon>Bacillus cereus group</taxon>
    </lineage>
</organism>
<evidence type="ECO:0000255" key="1">
    <source>
        <dbReference type="HAMAP-Rule" id="MF_00193"/>
    </source>
</evidence>
<keyword id="KW-0067">ATP-binding</keyword>
<keyword id="KW-0436">Ligase</keyword>
<keyword id="KW-0460">Magnesium</keyword>
<keyword id="KW-0479">Metal-binding</keyword>
<keyword id="KW-0520">NAD</keyword>
<keyword id="KW-0547">Nucleotide-binding</keyword>
<sequence>MTLQEQIMKALHVQPVIDPKAEIRKRVDFLKDYVKKTGAKGFVLGISGGQDSTLAGRLAQLAVEEIRNEGGNATFIAVRLPYKVQKDEDDAQLALQFIQADQSVAFDIASTVDAFSNQYENLLGESLTDFNKGNVKARIRMVTQYAIGGQNSLLVIGTDHAAEAVTGFFTKFGDGGADLLPLTGLTKRQGRALLQELGADERLYLKMPTADLLDEKPGQADETELGITYDQLDDYLEGKAVPTDVAEKIEKRYTVSEHKRQVPASMFDDWWK</sequence>
<protein>
    <recommendedName>
        <fullName evidence="1">NH(3)-dependent NAD(+) synthetase</fullName>
        <ecNumber evidence="1">6.3.1.5</ecNumber>
    </recommendedName>
</protein>
<name>NADE_BACC1</name>
<reference key="1">
    <citation type="journal article" date="2004" name="Nucleic Acids Res.">
        <title>The genome sequence of Bacillus cereus ATCC 10987 reveals metabolic adaptations and a large plasmid related to Bacillus anthracis pXO1.</title>
        <authorList>
            <person name="Rasko D.A."/>
            <person name="Ravel J."/>
            <person name="Oekstad O.A."/>
            <person name="Helgason E."/>
            <person name="Cer R.Z."/>
            <person name="Jiang L."/>
            <person name="Shores K.A."/>
            <person name="Fouts D.E."/>
            <person name="Tourasse N.J."/>
            <person name="Angiuoli S.V."/>
            <person name="Kolonay J.F."/>
            <person name="Nelson W.C."/>
            <person name="Kolstoe A.-B."/>
            <person name="Fraser C.M."/>
            <person name="Read T.D."/>
        </authorList>
    </citation>
    <scope>NUCLEOTIDE SEQUENCE [LARGE SCALE GENOMIC DNA]</scope>
    <source>
        <strain>ATCC 10987 / NRS 248</strain>
    </source>
</reference>
<proteinExistence type="inferred from homology"/>